<reference key="1">
    <citation type="journal article" date="2006" name="Virology">
        <title>Polydnavirus genomes reflect their dual roles as mutualists and pathogens.</title>
        <authorList>
            <person name="Webb B.A."/>
            <person name="Strand M.R."/>
            <person name="Dickey S.E."/>
            <person name="Beck M.H."/>
            <person name="Hilgarth R.S."/>
            <person name="Barney W.E."/>
            <person name="Kadash K."/>
            <person name="Kroemer J.A."/>
            <person name="Lindstrom K.G."/>
            <person name="Rattanadechakul W."/>
            <person name="Shelby K.S."/>
            <person name="Thoetkiattikul H."/>
            <person name="Turnbull M.W."/>
            <person name="Witherell R.A."/>
        </authorList>
    </citation>
    <scope>NUCLEOTIDE SEQUENCE [GENOMIC DNA]</scope>
</reference>
<organism>
    <name type="scientific">Microplitis demolitor bracovirus (isolate Webb)</name>
    <name type="common">MdBV</name>
    <dbReference type="NCBI Taxonomy" id="654919"/>
    <lineage>
        <taxon>Viruses</taxon>
        <taxon>Viruses incertae sedis</taxon>
        <taxon>Polydnaviriformidae</taxon>
        <taxon>Bracoviriform</taxon>
        <taxon>Microplitis demolitor bracovirus</taxon>
    </lineage>
</organism>
<sequence>MERQCSTKSQSWCVRTAEDEENNFMMICRKGNVYELMELAPFISVDGHLLHKYDHRGRQCIHMVALYDRKNAIMKIEILVNMGADINARERNTGNSLLHIAVKTKNYELAEWLCREPTVNLGAINYEHHTAYHMAYYLHDEKMKELLITNRAVCDNPEGIKMSEDDISDFSSDN</sequence>
<name>IKBC1_MDBVW</name>
<organismHost>
    <name type="scientific">Microplitis demolitor</name>
    <name type="common">Parasitoid wasp</name>
    <dbReference type="NCBI Taxonomy" id="69319"/>
</organismHost>
<comment type="function">
    <text>Suppresses the host immune response through NF-kappa-B inactivation. Possesses ankyrin repeat domains required for NF-kappa-B binding but lacks the regulatory regions required for dissociation from NF-kappa-B and degradation. Therefore, prevents host NF-kappa-B release and subsequent activation.</text>
</comment>
<comment type="similarity">
    <text evidence="1">Belongs to the polydnaviridae I-Kappa-B-like protein family.</text>
</comment>
<keyword id="KW-0040">ANK repeat</keyword>
<keyword id="KW-0945">Host-virus interaction</keyword>
<keyword id="KW-1100">Inhibition of host NF-kappa-B by virus</keyword>
<keyword id="KW-1185">Reference proteome</keyword>
<keyword id="KW-0677">Repeat</keyword>
<accession>Q5I160</accession>
<feature type="chain" id="PRO_0000405359" description="I-Kappa-B like protein C1">
    <location>
        <begin position="1"/>
        <end position="174"/>
    </location>
</feature>
<feature type="repeat" description="ANK 1">
    <location>
        <begin position="56"/>
        <end position="88"/>
    </location>
</feature>
<feature type="repeat" description="ANK 2">
    <location>
        <begin position="93"/>
        <end position="123"/>
    </location>
</feature>
<dbReference type="EMBL" id="AY875681">
    <property type="protein sequence ID" value="AAW51774.1"/>
    <property type="molecule type" value="Genomic_DNA"/>
</dbReference>
<dbReference type="RefSeq" id="YP_239368.1">
    <property type="nucleotide sequence ID" value="NC_007031.1"/>
</dbReference>
<dbReference type="SMR" id="Q5I160"/>
<dbReference type="KEGG" id="vg:5075804"/>
<dbReference type="Proteomes" id="UP000008168">
    <property type="component" value="Genome"/>
</dbReference>
<dbReference type="GO" id="GO:0051059">
    <property type="term" value="F:NF-kappaB binding"/>
    <property type="evidence" value="ECO:0007669"/>
    <property type="project" value="TreeGrafter"/>
</dbReference>
<dbReference type="GO" id="GO:0071356">
    <property type="term" value="P:cellular response to tumor necrosis factor"/>
    <property type="evidence" value="ECO:0007669"/>
    <property type="project" value="TreeGrafter"/>
</dbReference>
<dbReference type="GO" id="GO:0085034">
    <property type="term" value="P:symbiont-mediated suppression of host NF-kappaB cascade"/>
    <property type="evidence" value="ECO:0007669"/>
    <property type="project" value="UniProtKB-KW"/>
</dbReference>
<dbReference type="Gene3D" id="1.25.40.20">
    <property type="entry name" value="Ankyrin repeat-containing domain"/>
    <property type="match status" value="1"/>
</dbReference>
<dbReference type="InterPro" id="IPR002110">
    <property type="entry name" value="Ankyrin_rpt"/>
</dbReference>
<dbReference type="InterPro" id="IPR036770">
    <property type="entry name" value="Ankyrin_rpt-contain_sf"/>
</dbReference>
<dbReference type="InterPro" id="IPR051070">
    <property type="entry name" value="NF-kappa-B_inhibitor"/>
</dbReference>
<dbReference type="PANTHER" id="PTHR46680">
    <property type="entry name" value="NF-KAPPA-B INHIBITOR ALPHA"/>
    <property type="match status" value="1"/>
</dbReference>
<dbReference type="PANTHER" id="PTHR46680:SF3">
    <property type="entry name" value="NF-KAPPA-B INHIBITOR CACTUS"/>
    <property type="match status" value="1"/>
</dbReference>
<dbReference type="Pfam" id="PF12796">
    <property type="entry name" value="Ank_2"/>
    <property type="match status" value="1"/>
</dbReference>
<dbReference type="SMART" id="SM00248">
    <property type="entry name" value="ANK"/>
    <property type="match status" value="3"/>
</dbReference>
<dbReference type="SUPFAM" id="SSF48403">
    <property type="entry name" value="Ankyrin repeat"/>
    <property type="match status" value="1"/>
</dbReference>
<dbReference type="PROSITE" id="PS50297">
    <property type="entry name" value="ANK_REP_REGION"/>
    <property type="match status" value="1"/>
</dbReference>
<dbReference type="PROSITE" id="PS50088">
    <property type="entry name" value="ANK_REPEAT"/>
    <property type="match status" value="1"/>
</dbReference>
<gene>
    <name type="primary">C1</name>
</gene>
<evidence type="ECO:0000305" key="1"/>
<proteinExistence type="inferred from homology"/>
<protein>
    <recommendedName>
        <fullName>I-Kappa-B like protein C1</fullName>
    </recommendedName>
</protein>